<protein>
    <recommendedName>
        <fullName>Uncharacterized protein AF_0897</fullName>
    </recommendedName>
</protein>
<keyword id="KW-1185">Reference proteome</keyword>
<sequence length="365" mass="42499">MAKYDRDWFANSIKKIAEKKLEEARRHVEVQLDSAITLDKRHCSLVRHCKSLLINLYENTPIGYDIIMREPLIDLSLKKNDISVFDLVAINSTNGIASLIECKTGHNSKYMLKSFAKKIVSFNEHCSHIEKMLGINIKDSEFILCVESINTGGVLQSVNDHTNKKRRGQSSAFNELSEDKINRIIIWSVLEGENKIVKVYGNHLDTNFDRIMRGPPLFDYLSDLDLEYCSQPWRFIERVIYERIFVEKKRLDEANPKEFTYIEVVNALVDEFSDLAVDNLTLRSIAEQKASEIINHGIEYGIFEEVKKNRYCIKCRGERISTVRENLERKYRNNYINKEAERKAYEEAKKEVKRMHGDLSKFGIT</sequence>
<name>Y897_ARCFU</name>
<reference key="1">
    <citation type="journal article" date="1997" name="Nature">
        <title>The complete genome sequence of the hyperthermophilic, sulphate-reducing archaeon Archaeoglobus fulgidus.</title>
        <authorList>
            <person name="Klenk H.-P."/>
            <person name="Clayton R.A."/>
            <person name="Tomb J.-F."/>
            <person name="White O."/>
            <person name="Nelson K.E."/>
            <person name="Ketchum K.A."/>
            <person name="Dodson R.J."/>
            <person name="Gwinn M.L."/>
            <person name="Hickey E.K."/>
            <person name="Peterson J.D."/>
            <person name="Richardson D.L."/>
            <person name="Kerlavage A.R."/>
            <person name="Graham D.E."/>
            <person name="Kyrpides N.C."/>
            <person name="Fleischmann R.D."/>
            <person name="Quackenbush J."/>
            <person name="Lee N.H."/>
            <person name="Sutton G.G."/>
            <person name="Gill S.R."/>
            <person name="Kirkness E.F."/>
            <person name="Dougherty B.A."/>
            <person name="McKenney K."/>
            <person name="Adams M.D."/>
            <person name="Loftus B.J."/>
            <person name="Peterson S.N."/>
            <person name="Reich C.I."/>
            <person name="McNeil L.K."/>
            <person name="Badger J.H."/>
            <person name="Glodek A."/>
            <person name="Zhou L."/>
            <person name="Overbeek R."/>
            <person name="Gocayne J.D."/>
            <person name="Weidman J.F."/>
            <person name="McDonald L.A."/>
            <person name="Utterback T.R."/>
            <person name="Cotton M.D."/>
            <person name="Spriggs T."/>
            <person name="Artiach P."/>
            <person name="Kaine B.P."/>
            <person name="Sykes S.M."/>
            <person name="Sadow P.W."/>
            <person name="D'Andrea K.P."/>
            <person name="Bowman C."/>
            <person name="Fujii C."/>
            <person name="Garland S.A."/>
            <person name="Mason T.M."/>
            <person name="Olsen G.J."/>
            <person name="Fraser C.M."/>
            <person name="Smith H.O."/>
            <person name="Woese C.R."/>
            <person name="Venter J.C."/>
        </authorList>
    </citation>
    <scope>NUCLEOTIDE SEQUENCE [LARGE SCALE GENOMIC DNA]</scope>
    <source>
        <strain>ATCC 49558 / DSM 4304 / JCM 9628 / NBRC 100126 / VC-16</strain>
    </source>
</reference>
<accession>O29365</accession>
<feature type="chain" id="PRO_0000127943" description="Uncharacterized protein AF_0897">
    <location>
        <begin position="1"/>
        <end position="365"/>
    </location>
</feature>
<gene>
    <name type="ordered locus">AF_0897</name>
</gene>
<dbReference type="EMBL" id="AE000782">
    <property type="protein sequence ID" value="AAB90352.1"/>
    <property type="molecule type" value="Genomic_DNA"/>
</dbReference>
<dbReference type="PIR" id="A69362">
    <property type="entry name" value="A69362"/>
</dbReference>
<dbReference type="RefSeq" id="WP_010878397.1">
    <property type="nucleotide sequence ID" value="NC_000917.1"/>
</dbReference>
<dbReference type="SMR" id="O29365"/>
<dbReference type="STRING" id="224325.AF_0897"/>
<dbReference type="PaxDb" id="224325-AF_0897"/>
<dbReference type="EnsemblBacteria" id="AAB90352">
    <property type="protein sequence ID" value="AAB90352"/>
    <property type="gene ID" value="AF_0897"/>
</dbReference>
<dbReference type="GeneID" id="1484120"/>
<dbReference type="KEGG" id="afu:AF_0897"/>
<dbReference type="eggNOG" id="arCOG06120">
    <property type="taxonomic scope" value="Archaea"/>
</dbReference>
<dbReference type="HOGENOM" id="CLU_757798_0_0_2"/>
<dbReference type="Proteomes" id="UP000002199">
    <property type="component" value="Chromosome"/>
</dbReference>
<organism>
    <name type="scientific">Archaeoglobus fulgidus (strain ATCC 49558 / DSM 4304 / JCM 9628 / NBRC 100126 / VC-16)</name>
    <dbReference type="NCBI Taxonomy" id="224325"/>
    <lineage>
        <taxon>Archaea</taxon>
        <taxon>Methanobacteriati</taxon>
        <taxon>Methanobacteriota</taxon>
        <taxon>Archaeoglobi</taxon>
        <taxon>Archaeoglobales</taxon>
        <taxon>Archaeoglobaceae</taxon>
        <taxon>Archaeoglobus</taxon>
    </lineage>
</organism>
<proteinExistence type="predicted"/>